<sequence>MAEFILNAADFGVPRDGKTDSTERINQCLSTAVSKGYHTVWFPKGTYLIDATLGGDLNQRFRNAGIIVPGNLEIMMDPECIMKVIPNSSWGYSAFYVGKQENITISGGQIIGERDEHTYASAGIRSTHEWGFGICIEGCSNVVIDDVKISDFTGDGIIVSPRGLKTNQDYRTSEQIIIRRCEVRRSRRNNISITGCDMVTVEECLIEDAGTGNGTAPKFGIDIEGYGEGDVDYEEPINVSIRNNHFVGNVSSSVTNFNGYGILIEGNHSDNTISYGYGTQTVIKGNILRRPEDAAAAPRVGITGLGVSQGKETSDAVIAGNLITGFSTGIDVRGKSVLVTNNKISNFENTGILVYQSSDVKVDGNQIQNGLSETRRSIGLRAVLSDDIAFLNNCLIQVVDGVNVSGGNMIIKDNLLRKFSRGIWIAQGNAVIEGNTLNPDAFEAVPESYSVSVTNNAGAIIKNNTFKEFKNYPIYCSTSAKTSIIGNHLERSPLLVTIYISAGVHEIFDNTISVNRTAGNPIVIYLNGSAGSIISGNTINNLSAGTATAIQTNTSTNSKIIGNRIFKGTINKHSSDTIDGNMIV</sequence>
<feature type="chain" id="PRO_0000359905" description="Uncharacterized protein YclG">
    <location>
        <begin position="1"/>
        <end position="584"/>
    </location>
</feature>
<feature type="repeat" description="PbH1 1">
    <location>
        <begin position="100"/>
        <end position="128"/>
    </location>
</feature>
<feature type="repeat" description="PbH1 2">
    <location>
        <begin position="139"/>
        <end position="161"/>
    </location>
</feature>
<feature type="repeat" description="PbH1 3">
    <location>
        <begin position="173"/>
        <end position="195"/>
    </location>
</feature>
<feature type="repeat" description="PbH1 4">
    <location>
        <begin position="196"/>
        <end position="225"/>
    </location>
</feature>
<feature type="repeat" description="PbH1 5">
    <location>
        <begin position="236"/>
        <end position="266"/>
    </location>
</feature>
<feature type="repeat" description="PbH1 6">
    <location>
        <begin position="313"/>
        <end position="333"/>
    </location>
</feature>
<feature type="repeat" description="PbH1 7">
    <location>
        <begin position="334"/>
        <end position="356"/>
    </location>
</feature>
<feature type="repeat" description="PbH1 8">
    <location>
        <begin position="357"/>
        <end position="382"/>
    </location>
</feature>
<feature type="repeat" description="PbH1 9">
    <location>
        <begin position="406"/>
        <end position="427"/>
    </location>
</feature>
<feature type="repeat" description="PbH1 10">
    <location>
        <begin position="456"/>
        <end position="478"/>
    </location>
</feature>
<feature type="repeat" description="PbH1 11">
    <location>
        <begin position="529"/>
        <end position="554"/>
    </location>
</feature>
<keyword id="KW-1185">Reference proteome</keyword>
<keyword id="KW-0677">Repeat</keyword>
<reference key="1">
    <citation type="journal article" date="1996" name="Microbiology">
        <title>The 25 degrees-36 degrees region of the Bacillus subtilis chromosome: determination of the sequence of a 146 kb segment and identification of 113 genes.</title>
        <authorList>
            <person name="Yamane K."/>
            <person name="Kumano M."/>
            <person name="Kurita K."/>
        </authorList>
    </citation>
    <scope>NUCLEOTIDE SEQUENCE [GENOMIC DNA]</scope>
    <source>
        <strain>168</strain>
    </source>
</reference>
<reference key="2">
    <citation type="journal article" date="1997" name="Nature">
        <title>The complete genome sequence of the Gram-positive bacterium Bacillus subtilis.</title>
        <authorList>
            <person name="Kunst F."/>
            <person name="Ogasawara N."/>
            <person name="Moszer I."/>
            <person name="Albertini A.M."/>
            <person name="Alloni G."/>
            <person name="Azevedo V."/>
            <person name="Bertero M.G."/>
            <person name="Bessieres P."/>
            <person name="Bolotin A."/>
            <person name="Borchert S."/>
            <person name="Borriss R."/>
            <person name="Boursier L."/>
            <person name="Brans A."/>
            <person name="Braun M."/>
            <person name="Brignell S.C."/>
            <person name="Bron S."/>
            <person name="Brouillet S."/>
            <person name="Bruschi C.V."/>
            <person name="Caldwell B."/>
            <person name="Capuano V."/>
            <person name="Carter N.M."/>
            <person name="Choi S.-K."/>
            <person name="Codani J.-J."/>
            <person name="Connerton I.F."/>
            <person name="Cummings N.J."/>
            <person name="Daniel R.A."/>
            <person name="Denizot F."/>
            <person name="Devine K.M."/>
            <person name="Duesterhoeft A."/>
            <person name="Ehrlich S.D."/>
            <person name="Emmerson P.T."/>
            <person name="Entian K.-D."/>
            <person name="Errington J."/>
            <person name="Fabret C."/>
            <person name="Ferrari E."/>
            <person name="Foulger D."/>
            <person name="Fritz C."/>
            <person name="Fujita M."/>
            <person name="Fujita Y."/>
            <person name="Fuma S."/>
            <person name="Galizzi A."/>
            <person name="Galleron N."/>
            <person name="Ghim S.-Y."/>
            <person name="Glaser P."/>
            <person name="Goffeau A."/>
            <person name="Golightly E.J."/>
            <person name="Grandi G."/>
            <person name="Guiseppi G."/>
            <person name="Guy B.J."/>
            <person name="Haga K."/>
            <person name="Haiech J."/>
            <person name="Harwood C.R."/>
            <person name="Henaut A."/>
            <person name="Hilbert H."/>
            <person name="Holsappel S."/>
            <person name="Hosono S."/>
            <person name="Hullo M.-F."/>
            <person name="Itaya M."/>
            <person name="Jones L.-M."/>
            <person name="Joris B."/>
            <person name="Karamata D."/>
            <person name="Kasahara Y."/>
            <person name="Klaerr-Blanchard M."/>
            <person name="Klein C."/>
            <person name="Kobayashi Y."/>
            <person name="Koetter P."/>
            <person name="Koningstein G."/>
            <person name="Krogh S."/>
            <person name="Kumano M."/>
            <person name="Kurita K."/>
            <person name="Lapidus A."/>
            <person name="Lardinois S."/>
            <person name="Lauber J."/>
            <person name="Lazarevic V."/>
            <person name="Lee S.-M."/>
            <person name="Levine A."/>
            <person name="Liu H."/>
            <person name="Masuda S."/>
            <person name="Mauel C."/>
            <person name="Medigue C."/>
            <person name="Medina N."/>
            <person name="Mellado R.P."/>
            <person name="Mizuno M."/>
            <person name="Moestl D."/>
            <person name="Nakai S."/>
            <person name="Noback M."/>
            <person name="Noone D."/>
            <person name="O'Reilly M."/>
            <person name="Ogawa K."/>
            <person name="Ogiwara A."/>
            <person name="Oudega B."/>
            <person name="Park S.-H."/>
            <person name="Parro V."/>
            <person name="Pohl T.M."/>
            <person name="Portetelle D."/>
            <person name="Porwollik S."/>
            <person name="Prescott A.M."/>
            <person name="Presecan E."/>
            <person name="Pujic P."/>
            <person name="Purnelle B."/>
            <person name="Rapoport G."/>
            <person name="Rey M."/>
            <person name="Reynolds S."/>
            <person name="Rieger M."/>
            <person name="Rivolta C."/>
            <person name="Rocha E."/>
            <person name="Roche B."/>
            <person name="Rose M."/>
            <person name="Sadaie Y."/>
            <person name="Sato T."/>
            <person name="Scanlan E."/>
            <person name="Schleich S."/>
            <person name="Schroeter R."/>
            <person name="Scoffone F."/>
            <person name="Sekiguchi J."/>
            <person name="Sekowska A."/>
            <person name="Seror S.J."/>
            <person name="Serror P."/>
            <person name="Shin B.-S."/>
            <person name="Soldo B."/>
            <person name="Sorokin A."/>
            <person name="Tacconi E."/>
            <person name="Takagi T."/>
            <person name="Takahashi H."/>
            <person name="Takemaru K."/>
            <person name="Takeuchi M."/>
            <person name="Tamakoshi A."/>
            <person name="Tanaka T."/>
            <person name="Terpstra P."/>
            <person name="Tognoni A."/>
            <person name="Tosato V."/>
            <person name="Uchiyama S."/>
            <person name="Vandenbol M."/>
            <person name="Vannier F."/>
            <person name="Vassarotti A."/>
            <person name="Viari A."/>
            <person name="Wambutt R."/>
            <person name="Wedler E."/>
            <person name="Wedler H."/>
            <person name="Weitzenegger T."/>
            <person name="Winters P."/>
            <person name="Wipat A."/>
            <person name="Yamamoto H."/>
            <person name="Yamane K."/>
            <person name="Yasumoto K."/>
            <person name="Yata K."/>
            <person name="Yoshida K."/>
            <person name="Yoshikawa H.-F."/>
            <person name="Zumstein E."/>
            <person name="Yoshikawa H."/>
            <person name="Danchin A."/>
        </authorList>
    </citation>
    <scope>NUCLEOTIDE SEQUENCE [LARGE SCALE GENOMIC DNA]</scope>
    <source>
        <strain>168</strain>
    </source>
</reference>
<name>YCLG_BACSU</name>
<protein>
    <recommendedName>
        <fullName>Uncharacterized protein YclG</fullName>
    </recommendedName>
</protein>
<proteinExistence type="predicted"/>
<dbReference type="EMBL" id="D50453">
    <property type="protein sequence ID" value="BAA09001.1"/>
    <property type="molecule type" value="Genomic_DNA"/>
</dbReference>
<dbReference type="EMBL" id="AL009126">
    <property type="protein sequence ID" value="CAB12176.1"/>
    <property type="molecule type" value="Genomic_DNA"/>
</dbReference>
<dbReference type="PIR" id="D69762">
    <property type="entry name" value="D69762"/>
</dbReference>
<dbReference type="RefSeq" id="NP_388250.1">
    <property type="nucleotide sequence ID" value="NC_000964.3"/>
</dbReference>
<dbReference type="RefSeq" id="WP_003246729.1">
    <property type="nucleotide sequence ID" value="NZ_OZ025638.1"/>
</dbReference>
<dbReference type="SMR" id="P94409"/>
<dbReference type="FunCoup" id="P94409">
    <property type="interactions" value="60"/>
</dbReference>
<dbReference type="STRING" id="224308.BSU03680"/>
<dbReference type="PaxDb" id="224308-BSU03680"/>
<dbReference type="EnsemblBacteria" id="CAB12176">
    <property type="protein sequence ID" value="CAB12176"/>
    <property type="gene ID" value="BSU_03680"/>
</dbReference>
<dbReference type="GeneID" id="938292"/>
<dbReference type="KEGG" id="bsu:BSU03680"/>
<dbReference type="PATRIC" id="fig|224308.179.peg.388"/>
<dbReference type="eggNOG" id="COG5434">
    <property type="taxonomic scope" value="Bacteria"/>
</dbReference>
<dbReference type="InParanoid" id="P94409"/>
<dbReference type="OrthoDB" id="2488735at2"/>
<dbReference type="BioCyc" id="BSUB:BSU03680-MONOMER"/>
<dbReference type="Proteomes" id="UP000001570">
    <property type="component" value="Chromosome"/>
</dbReference>
<dbReference type="Gene3D" id="2.160.20.10">
    <property type="entry name" value="Single-stranded right-handed beta-helix, Pectin lyase-like"/>
    <property type="match status" value="2"/>
</dbReference>
<dbReference type="InterPro" id="IPR039448">
    <property type="entry name" value="Beta_helix"/>
</dbReference>
<dbReference type="InterPro" id="IPR006633">
    <property type="entry name" value="Carb-bd_sugar_hydrolysis-dom"/>
</dbReference>
<dbReference type="InterPro" id="IPR006626">
    <property type="entry name" value="PbH1"/>
</dbReference>
<dbReference type="InterPro" id="IPR012334">
    <property type="entry name" value="Pectin_lyas_fold"/>
</dbReference>
<dbReference type="InterPro" id="IPR011050">
    <property type="entry name" value="Pectin_lyase_fold/virulence"/>
</dbReference>
<dbReference type="InterPro" id="IPR024535">
    <property type="entry name" value="RHGA/B-epi-like_pectate_lyase"/>
</dbReference>
<dbReference type="Pfam" id="PF13229">
    <property type="entry name" value="Beta_helix"/>
    <property type="match status" value="2"/>
</dbReference>
<dbReference type="Pfam" id="PF12708">
    <property type="entry name" value="Pect-lyase_RHGA_epim"/>
    <property type="match status" value="1"/>
</dbReference>
<dbReference type="SMART" id="SM00722">
    <property type="entry name" value="CASH"/>
    <property type="match status" value="1"/>
</dbReference>
<dbReference type="SMART" id="SM00710">
    <property type="entry name" value="PbH1"/>
    <property type="match status" value="11"/>
</dbReference>
<dbReference type="SUPFAM" id="SSF51126">
    <property type="entry name" value="Pectin lyase-like"/>
    <property type="match status" value="2"/>
</dbReference>
<gene>
    <name type="primary">yclG</name>
    <name type="ordered locus">BSU03680</name>
</gene>
<accession>P94409</accession>
<accession>Q797P5</accession>
<organism>
    <name type="scientific">Bacillus subtilis (strain 168)</name>
    <dbReference type="NCBI Taxonomy" id="224308"/>
    <lineage>
        <taxon>Bacteria</taxon>
        <taxon>Bacillati</taxon>
        <taxon>Bacillota</taxon>
        <taxon>Bacilli</taxon>
        <taxon>Bacillales</taxon>
        <taxon>Bacillaceae</taxon>
        <taxon>Bacillus</taxon>
    </lineage>
</organism>